<name>FGF8_CHICK</name>
<gene>
    <name type="primary">FGF8</name>
</gene>
<accession>Q90722</accession>
<protein>
    <recommendedName>
        <fullName>Fibroblast growth factor 8</fullName>
        <shortName>FGF-8</shortName>
    </recommendedName>
    <alternativeName>
        <fullName>Heparin-binding growth factor 8</fullName>
        <shortName>HBGF-8</shortName>
    </alternativeName>
</protein>
<feature type="signal peptide" evidence="1">
    <location>
        <begin position="1"/>
        <end position="22"/>
    </location>
</feature>
<feature type="chain" id="PRO_0000008972" description="Fibroblast growth factor 8">
    <location>
        <begin position="23"/>
        <end position="214"/>
    </location>
</feature>
<feature type="glycosylation site" description="N-linked (GlcNAc...) asparagine" evidence="1">
    <location>
        <position position="31"/>
    </location>
</feature>
<feature type="glycosylation site" description="N-linked (GlcNAc...) asparagine" evidence="1">
    <location>
        <position position="137"/>
    </location>
</feature>
<feature type="glycosylation site" description="N-linked (GlcNAc...) asparagine" evidence="1">
    <location>
        <position position="207"/>
    </location>
</feature>
<evidence type="ECO:0000255" key="1"/>
<evidence type="ECO:0000305" key="2"/>
<keyword id="KW-0217">Developmental protein</keyword>
<keyword id="KW-0221">Differentiation</keyword>
<keyword id="KW-0325">Glycoprotein</keyword>
<keyword id="KW-0339">Growth factor</keyword>
<keyword id="KW-0497">Mitogen</keyword>
<keyword id="KW-1185">Reference proteome</keyword>
<keyword id="KW-0964">Secreted</keyword>
<keyword id="KW-0732">Signal</keyword>
<proteinExistence type="evidence at transcript level"/>
<dbReference type="EMBL" id="U55189">
    <property type="protein sequence ID" value="AAB06713.1"/>
    <property type="molecule type" value="mRNA"/>
</dbReference>
<dbReference type="RefSeq" id="NP_001012785.1">
    <property type="nucleotide sequence ID" value="NM_001012767.1"/>
</dbReference>
<dbReference type="SMR" id="Q90722"/>
<dbReference type="FunCoup" id="Q90722">
    <property type="interactions" value="157"/>
</dbReference>
<dbReference type="STRING" id="9031.ENSGALP00000032574"/>
<dbReference type="GlyCosmos" id="Q90722">
    <property type="glycosylation" value="3 sites, No reported glycans"/>
</dbReference>
<dbReference type="GlyGen" id="Q90722">
    <property type="glycosylation" value="3 sites"/>
</dbReference>
<dbReference type="PaxDb" id="9031-ENSGALP00000032574"/>
<dbReference type="GeneID" id="396313"/>
<dbReference type="KEGG" id="gga:396313"/>
<dbReference type="CTD" id="2253"/>
<dbReference type="VEuPathDB" id="HostDB:geneid_396313"/>
<dbReference type="eggNOG" id="KOG3885">
    <property type="taxonomic scope" value="Eukaryota"/>
</dbReference>
<dbReference type="InParanoid" id="Q90722"/>
<dbReference type="OrthoDB" id="5988014at2759"/>
<dbReference type="PhylomeDB" id="Q90722"/>
<dbReference type="PRO" id="PR:Q90722"/>
<dbReference type="Proteomes" id="UP000000539">
    <property type="component" value="Unassembled WGS sequence"/>
</dbReference>
<dbReference type="GO" id="GO:0005737">
    <property type="term" value="C:cytoplasm"/>
    <property type="evidence" value="ECO:0000318"/>
    <property type="project" value="GO_Central"/>
</dbReference>
<dbReference type="GO" id="GO:0005615">
    <property type="term" value="C:extracellular space"/>
    <property type="evidence" value="ECO:0000318"/>
    <property type="project" value="GO_Central"/>
</dbReference>
<dbReference type="GO" id="GO:0008083">
    <property type="term" value="F:growth factor activity"/>
    <property type="evidence" value="ECO:0000318"/>
    <property type="project" value="GO_Central"/>
</dbReference>
<dbReference type="GO" id="GO:0005105">
    <property type="term" value="F:type 1 fibroblast growth factor receptor binding"/>
    <property type="evidence" value="ECO:0000318"/>
    <property type="project" value="GO_Central"/>
</dbReference>
<dbReference type="GO" id="GO:0005111">
    <property type="term" value="F:type 2 fibroblast growth factor receptor binding"/>
    <property type="evidence" value="ECO:0000318"/>
    <property type="project" value="GO_Central"/>
</dbReference>
<dbReference type="GO" id="GO:0009953">
    <property type="term" value="P:dorsal/ventral pattern formation"/>
    <property type="evidence" value="ECO:0000318"/>
    <property type="project" value="GO_Central"/>
</dbReference>
<dbReference type="GO" id="GO:0009880">
    <property type="term" value="P:embryonic pattern specification"/>
    <property type="evidence" value="ECO:0000314"/>
    <property type="project" value="AgBase"/>
</dbReference>
<dbReference type="GO" id="GO:0060684">
    <property type="term" value="P:epithelial-mesenchymal cell signaling"/>
    <property type="evidence" value="ECO:0000303"/>
    <property type="project" value="AgBase"/>
</dbReference>
<dbReference type="GO" id="GO:0008543">
    <property type="term" value="P:fibroblast growth factor receptor signaling pathway"/>
    <property type="evidence" value="ECO:0000318"/>
    <property type="project" value="GO_Central"/>
</dbReference>
<dbReference type="GO" id="GO:0060174">
    <property type="term" value="P:limb bud formation"/>
    <property type="evidence" value="ECO:0000304"/>
    <property type="project" value="AgBase"/>
</dbReference>
<dbReference type="GO" id="GO:0060173">
    <property type="term" value="P:limb development"/>
    <property type="evidence" value="ECO:0000314"/>
    <property type="project" value="AgBase"/>
</dbReference>
<dbReference type="GO" id="GO:0022008">
    <property type="term" value="P:neurogenesis"/>
    <property type="evidence" value="ECO:0000318"/>
    <property type="project" value="GO_Central"/>
</dbReference>
<dbReference type="GO" id="GO:0051781">
    <property type="term" value="P:positive regulation of cell division"/>
    <property type="evidence" value="ECO:0007669"/>
    <property type="project" value="UniProtKB-KW"/>
</dbReference>
<dbReference type="GO" id="GO:0008284">
    <property type="term" value="P:positive regulation of cell population proliferation"/>
    <property type="evidence" value="ECO:0000318"/>
    <property type="project" value="GO_Central"/>
</dbReference>
<dbReference type="GO" id="GO:0045893">
    <property type="term" value="P:positive regulation of DNA-templated transcription"/>
    <property type="evidence" value="ECO:0000315"/>
    <property type="project" value="AgBase"/>
</dbReference>
<dbReference type="GO" id="GO:0010628">
    <property type="term" value="P:positive regulation of gene expression"/>
    <property type="evidence" value="ECO:0000314"/>
    <property type="project" value="UniProtKB"/>
</dbReference>
<dbReference type="GO" id="GO:0043410">
    <property type="term" value="P:positive regulation of MAPK cascade"/>
    <property type="evidence" value="ECO:0000318"/>
    <property type="project" value="GO_Central"/>
</dbReference>
<dbReference type="GO" id="GO:0045944">
    <property type="term" value="P:positive regulation of transcription by RNA polymerase II"/>
    <property type="evidence" value="ECO:0000316"/>
    <property type="project" value="CACAO"/>
</dbReference>
<dbReference type="GO" id="GO:0030177">
    <property type="term" value="P:positive regulation of Wnt signaling pathway"/>
    <property type="evidence" value="ECO:0000315"/>
    <property type="project" value="AgBase"/>
</dbReference>
<dbReference type="GO" id="GO:0030334">
    <property type="term" value="P:regulation of cell migration"/>
    <property type="evidence" value="ECO:0000318"/>
    <property type="project" value="GO_Central"/>
</dbReference>
<dbReference type="CDD" id="cd23322">
    <property type="entry name" value="beta-trefoil_FGF8"/>
    <property type="match status" value="1"/>
</dbReference>
<dbReference type="FunFam" id="2.80.10.50:FF:000007">
    <property type="entry name" value="Fibroblast growth factor"/>
    <property type="match status" value="1"/>
</dbReference>
<dbReference type="Gene3D" id="2.80.10.50">
    <property type="match status" value="1"/>
</dbReference>
<dbReference type="InterPro" id="IPR002209">
    <property type="entry name" value="Fibroblast_GF_fam"/>
</dbReference>
<dbReference type="InterPro" id="IPR008996">
    <property type="entry name" value="IL1/FGF"/>
</dbReference>
<dbReference type="PANTHER" id="PTHR11486">
    <property type="entry name" value="FIBROBLAST GROWTH FACTOR"/>
    <property type="match status" value="1"/>
</dbReference>
<dbReference type="Pfam" id="PF00167">
    <property type="entry name" value="FGF"/>
    <property type="match status" value="1"/>
</dbReference>
<dbReference type="PRINTS" id="PR00262">
    <property type="entry name" value="IL1HBGF"/>
</dbReference>
<dbReference type="SMART" id="SM00442">
    <property type="entry name" value="FGF"/>
    <property type="match status" value="1"/>
</dbReference>
<dbReference type="SUPFAM" id="SSF50353">
    <property type="entry name" value="Cytokine"/>
    <property type="match status" value="1"/>
</dbReference>
<dbReference type="PROSITE" id="PS00247">
    <property type="entry name" value="HBGF_FGF"/>
    <property type="match status" value="1"/>
</dbReference>
<organism>
    <name type="scientific">Gallus gallus</name>
    <name type="common">Chicken</name>
    <dbReference type="NCBI Taxonomy" id="9031"/>
    <lineage>
        <taxon>Eukaryota</taxon>
        <taxon>Metazoa</taxon>
        <taxon>Chordata</taxon>
        <taxon>Craniata</taxon>
        <taxon>Vertebrata</taxon>
        <taxon>Euteleostomi</taxon>
        <taxon>Archelosauria</taxon>
        <taxon>Archosauria</taxon>
        <taxon>Dinosauria</taxon>
        <taxon>Saurischia</taxon>
        <taxon>Theropoda</taxon>
        <taxon>Coelurosauria</taxon>
        <taxon>Aves</taxon>
        <taxon>Neognathae</taxon>
        <taxon>Galloanserae</taxon>
        <taxon>Galliformes</taxon>
        <taxon>Phasianidae</taxon>
        <taxon>Phasianinae</taxon>
        <taxon>Gallus</taxon>
    </lineage>
</organism>
<reference key="1">
    <citation type="journal article" date="1996" name="Development">
        <title>Involvement of FGF-8 in initiation, outgrowth and patterning of the vertebrate limb.</title>
        <authorList>
            <person name="Vogel A."/>
            <person name="Rodriguez C."/>
            <person name="Izpisua-Belmonte J.-C."/>
        </authorList>
    </citation>
    <scope>NUCLEOTIDE SEQUENCE [MRNA]</scope>
    <source>
        <strain>White leghorn</strain>
    </source>
</reference>
<sequence>MDPCSSLFSYVFMHLFVLCLQAQVTVQSPPNFTQHVREQSLVTDQLSRRLVRTYQLYSRTSGKHVQILDNKKINAMAEDGDVHAKLIVETDTFGSRVRIKGAATGFYICMNKKGKLIGKSNGKGKDCVFTEIVLENNYTALQNAKYEGWYMAFTRKGRPRKGSKTRQHQREVHFMKRLPKGHQTTEPHRRFEFLNYPFNRRSKRTRNSSASLRP</sequence>
<comment type="function">
    <text>Plays an important role in the regulation of embryonic development, cell proliferation, cell differentiation and cell migration. Involved in initiation, outgrowth and patterning of the limbs.</text>
</comment>
<comment type="subcellular location">
    <subcellularLocation>
        <location>Secreted</location>
    </subcellularLocation>
</comment>
<comment type="similarity">
    <text evidence="2">Belongs to the heparin-binding growth factors family.</text>
</comment>